<reference key="1">
    <citation type="journal article" date="2005" name="Proc. Natl. Acad. Sci. U.S.A.">
        <title>The psychrophilic lifestyle as revealed by the genome sequence of Colwellia psychrerythraea 34H through genomic and proteomic analyses.</title>
        <authorList>
            <person name="Methe B.A."/>
            <person name="Nelson K.E."/>
            <person name="Deming J.W."/>
            <person name="Momen B."/>
            <person name="Melamud E."/>
            <person name="Zhang X."/>
            <person name="Moult J."/>
            <person name="Madupu R."/>
            <person name="Nelson W.C."/>
            <person name="Dodson R.J."/>
            <person name="Brinkac L.M."/>
            <person name="Daugherty S.C."/>
            <person name="Durkin A.S."/>
            <person name="DeBoy R.T."/>
            <person name="Kolonay J.F."/>
            <person name="Sullivan S.A."/>
            <person name="Zhou L."/>
            <person name="Davidsen T.M."/>
            <person name="Wu M."/>
            <person name="Huston A.L."/>
            <person name="Lewis M."/>
            <person name="Weaver B."/>
            <person name="Weidman J.F."/>
            <person name="Khouri H."/>
            <person name="Utterback T.R."/>
            <person name="Feldblyum T.V."/>
            <person name="Fraser C.M."/>
        </authorList>
    </citation>
    <scope>NUCLEOTIDE SEQUENCE [LARGE SCALE GENOMIC DNA]</scope>
    <source>
        <strain>34H / ATCC BAA-681</strain>
    </source>
</reference>
<name>ARGJ_COLP3</name>
<gene>
    <name evidence="1" type="primary">argJ</name>
    <name type="ordered locus">CPS_1312</name>
</gene>
<sequence length="424" mass="44899">MPVNLPEIVPASLTPIQGIRLGWAESNIKTQNRKDLLVIEICDGSAVSGVFTQNRFCAAPVTLCKKHLDAVKNNATTGGNVSGIKALVVNTGNANAGTGEQGMLDALTTCQHLAEIMAIPVESILPFSTGVILEHLPMDKLLAGLPLAVTNLTTDNWADAASAIMTTDIAPKAYATQVKVGGESINITGISKGAGMIHPNMATMLGYVATDANITQSLLDSMTKEIADLSFNCISVDGDTSTNDSFIVIATGKSNAVAITSPNDKGYQEVFDALLETSQYLAKAIVRDGEGATKFITVTVKGALSIDEAKTIGFSIGKSPLVKTAMFASDPNLGRVLAAIGYASRECDSLADLDTNQLELYFGGLLVAEKGGRAASYKEDEGQAIMNEAEIDITVQLHRGNEESTIWTCDFSYDYVKINAEYRT</sequence>
<comment type="function">
    <text evidence="1">Catalyzes two activities which are involved in the cyclic version of arginine biosynthesis: the synthesis of N-acetylglutamate from glutamate and acetyl-CoA as the acetyl donor, and of ornithine by transacetylation between N(2)-acetylornithine and glutamate.</text>
</comment>
<comment type="catalytic activity">
    <reaction evidence="1">
        <text>N(2)-acetyl-L-ornithine + L-glutamate = N-acetyl-L-glutamate + L-ornithine</text>
        <dbReference type="Rhea" id="RHEA:15349"/>
        <dbReference type="ChEBI" id="CHEBI:29985"/>
        <dbReference type="ChEBI" id="CHEBI:44337"/>
        <dbReference type="ChEBI" id="CHEBI:46911"/>
        <dbReference type="ChEBI" id="CHEBI:57805"/>
        <dbReference type="EC" id="2.3.1.35"/>
    </reaction>
</comment>
<comment type="catalytic activity">
    <reaction evidence="1">
        <text>L-glutamate + acetyl-CoA = N-acetyl-L-glutamate + CoA + H(+)</text>
        <dbReference type="Rhea" id="RHEA:24292"/>
        <dbReference type="ChEBI" id="CHEBI:15378"/>
        <dbReference type="ChEBI" id="CHEBI:29985"/>
        <dbReference type="ChEBI" id="CHEBI:44337"/>
        <dbReference type="ChEBI" id="CHEBI:57287"/>
        <dbReference type="ChEBI" id="CHEBI:57288"/>
        <dbReference type="EC" id="2.3.1.1"/>
    </reaction>
</comment>
<comment type="pathway">
    <text evidence="1">Amino-acid biosynthesis; L-arginine biosynthesis; L-ornithine and N-acetyl-L-glutamate from L-glutamate and N(2)-acetyl-L-ornithine (cyclic): step 1/1.</text>
</comment>
<comment type="pathway">
    <text evidence="1">Amino-acid biosynthesis; L-arginine biosynthesis; N(2)-acetyl-L-ornithine from L-glutamate: step 1/4.</text>
</comment>
<comment type="subunit">
    <text evidence="1">Heterotetramer of two alpha and two beta chains.</text>
</comment>
<comment type="subcellular location">
    <subcellularLocation>
        <location evidence="1">Cytoplasm</location>
    </subcellularLocation>
</comment>
<comment type="similarity">
    <text evidence="1">Belongs to the ArgJ family.</text>
</comment>
<accession>Q486G0</accession>
<feature type="chain" id="PRO_0000227218" description="Arginine biosynthesis bifunctional protein ArgJ alpha chain" evidence="1">
    <location>
        <begin position="1"/>
        <end position="202"/>
    </location>
</feature>
<feature type="chain" id="PRO_0000227219" description="Arginine biosynthesis bifunctional protein ArgJ beta chain" evidence="1">
    <location>
        <begin position="203"/>
        <end position="424"/>
    </location>
</feature>
<feature type="active site" description="Nucleophile" evidence="1">
    <location>
        <position position="203"/>
    </location>
</feature>
<feature type="binding site" evidence="1">
    <location>
        <position position="166"/>
    </location>
    <ligand>
        <name>substrate</name>
    </ligand>
</feature>
<feature type="binding site" evidence="1">
    <location>
        <position position="192"/>
    </location>
    <ligand>
        <name>substrate</name>
    </ligand>
</feature>
<feature type="binding site" evidence="1">
    <location>
        <position position="203"/>
    </location>
    <ligand>
        <name>substrate</name>
    </ligand>
</feature>
<feature type="binding site" evidence="1">
    <location>
        <position position="290"/>
    </location>
    <ligand>
        <name>substrate</name>
    </ligand>
</feature>
<feature type="binding site" evidence="1">
    <location>
        <position position="419"/>
    </location>
    <ligand>
        <name>substrate</name>
    </ligand>
</feature>
<feature type="binding site" evidence="1">
    <location>
        <position position="424"/>
    </location>
    <ligand>
        <name>substrate</name>
    </ligand>
</feature>
<feature type="site" description="Involved in the stabilization of negative charge on the oxyanion by the formation of the oxyanion hole" evidence="1">
    <location>
        <position position="129"/>
    </location>
</feature>
<feature type="site" description="Involved in the stabilization of negative charge on the oxyanion by the formation of the oxyanion hole" evidence="1">
    <location>
        <position position="130"/>
    </location>
</feature>
<feature type="site" description="Cleavage; by autolysis" evidence="1">
    <location>
        <begin position="202"/>
        <end position="203"/>
    </location>
</feature>
<evidence type="ECO:0000255" key="1">
    <source>
        <dbReference type="HAMAP-Rule" id="MF_01106"/>
    </source>
</evidence>
<dbReference type="EC" id="2.3.1.35" evidence="1"/>
<dbReference type="EC" id="2.3.1.1" evidence="1"/>
<dbReference type="EMBL" id="CP000083">
    <property type="protein sequence ID" value="AAZ27308.1"/>
    <property type="molecule type" value="Genomic_DNA"/>
</dbReference>
<dbReference type="RefSeq" id="WP_011042149.1">
    <property type="nucleotide sequence ID" value="NC_003910.7"/>
</dbReference>
<dbReference type="SMR" id="Q486G0"/>
<dbReference type="STRING" id="167879.CPS_1312"/>
<dbReference type="MEROPS" id="T05.001"/>
<dbReference type="KEGG" id="cps:CPS_1312"/>
<dbReference type="eggNOG" id="COG1364">
    <property type="taxonomic scope" value="Bacteria"/>
</dbReference>
<dbReference type="HOGENOM" id="CLU_027172_1_0_6"/>
<dbReference type="UniPathway" id="UPA00068">
    <property type="reaction ID" value="UER00106"/>
</dbReference>
<dbReference type="UniPathway" id="UPA00068">
    <property type="reaction ID" value="UER00111"/>
</dbReference>
<dbReference type="Proteomes" id="UP000000547">
    <property type="component" value="Chromosome"/>
</dbReference>
<dbReference type="GO" id="GO:0005737">
    <property type="term" value="C:cytoplasm"/>
    <property type="evidence" value="ECO:0007669"/>
    <property type="project" value="UniProtKB-SubCell"/>
</dbReference>
<dbReference type="GO" id="GO:0004358">
    <property type="term" value="F:glutamate N-acetyltransferase activity"/>
    <property type="evidence" value="ECO:0007669"/>
    <property type="project" value="UniProtKB-UniRule"/>
</dbReference>
<dbReference type="GO" id="GO:0004042">
    <property type="term" value="F:L-glutamate N-acetyltransferase activity"/>
    <property type="evidence" value="ECO:0007669"/>
    <property type="project" value="UniProtKB-UniRule"/>
</dbReference>
<dbReference type="GO" id="GO:0006526">
    <property type="term" value="P:L-arginine biosynthetic process"/>
    <property type="evidence" value="ECO:0007669"/>
    <property type="project" value="UniProtKB-UniRule"/>
</dbReference>
<dbReference type="GO" id="GO:0006592">
    <property type="term" value="P:ornithine biosynthetic process"/>
    <property type="evidence" value="ECO:0007669"/>
    <property type="project" value="TreeGrafter"/>
</dbReference>
<dbReference type="CDD" id="cd02152">
    <property type="entry name" value="OAT"/>
    <property type="match status" value="1"/>
</dbReference>
<dbReference type="FunFam" id="3.10.20.340:FF:000001">
    <property type="entry name" value="Arginine biosynthesis bifunctional protein ArgJ, chloroplastic"/>
    <property type="match status" value="1"/>
</dbReference>
<dbReference type="FunFam" id="3.60.70.12:FF:000001">
    <property type="entry name" value="Arginine biosynthesis bifunctional protein ArgJ, chloroplastic"/>
    <property type="match status" value="1"/>
</dbReference>
<dbReference type="Gene3D" id="3.10.20.340">
    <property type="entry name" value="ArgJ beta chain, C-terminal domain"/>
    <property type="match status" value="1"/>
</dbReference>
<dbReference type="Gene3D" id="3.60.70.12">
    <property type="entry name" value="L-amino peptidase D-ALA esterase/amidase"/>
    <property type="match status" value="1"/>
</dbReference>
<dbReference type="HAMAP" id="MF_01106">
    <property type="entry name" value="ArgJ"/>
    <property type="match status" value="1"/>
</dbReference>
<dbReference type="InterPro" id="IPR002813">
    <property type="entry name" value="Arg_biosynth_ArgJ"/>
</dbReference>
<dbReference type="InterPro" id="IPR016117">
    <property type="entry name" value="ArgJ-like_dom_sf"/>
</dbReference>
<dbReference type="InterPro" id="IPR042195">
    <property type="entry name" value="ArgJ_beta_C"/>
</dbReference>
<dbReference type="NCBIfam" id="TIGR00120">
    <property type="entry name" value="ArgJ"/>
    <property type="match status" value="1"/>
</dbReference>
<dbReference type="NCBIfam" id="NF003802">
    <property type="entry name" value="PRK05388.1"/>
    <property type="match status" value="1"/>
</dbReference>
<dbReference type="PANTHER" id="PTHR23100">
    <property type="entry name" value="ARGININE BIOSYNTHESIS BIFUNCTIONAL PROTEIN ARGJ"/>
    <property type="match status" value="1"/>
</dbReference>
<dbReference type="PANTHER" id="PTHR23100:SF0">
    <property type="entry name" value="ARGININE BIOSYNTHESIS BIFUNCTIONAL PROTEIN ARGJ, MITOCHONDRIAL"/>
    <property type="match status" value="1"/>
</dbReference>
<dbReference type="Pfam" id="PF01960">
    <property type="entry name" value="ArgJ"/>
    <property type="match status" value="1"/>
</dbReference>
<dbReference type="SUPFAM" id="SSF56266">
    <property type="entry name" value="DmpA/ArgJ-like"/>
    <property type="match status" value="1"/>
</dbReference>
<proteinExistence type="inferred from homology"/>
<keyword id="KW-0012">Acyltransferase</keyword>
<keyword id="KW-0028">Amino-acid biosynthesis</keyword>
<keyword id="KW-0055">Arginine biosynthesis</keyword>
<keyword id="KW-0068">Autocatalytic cleavage</keyword>
<keyword id="KW-0963">Cytoplasm</keyword>
<keyword id="KW-0511">Multifunctional enzyme</keyword>
<keyword id="KW-0808">Transferase</keyword>
<protein>
    <recommendedName>
        <fullName evidence="1">Arginine biosynthesis bifunctional protein ArgJ</fullName>
    </recommendedName>
    <domain>
        <recommendedName>
            <fullName evidence="1">Glutamate N-acetyltransferase</fullName>
            <ecNumber evidence="1">2.3.1.35</ecNumber>
        </recommendedName>
        <alternativeName>
            <fullName evidence="1">Ornithine acetyltransferase</fullName>
            <shortName evidence="1">OATase</shortName>
        </alternativeName>
        <alternativeName>
            <fullName evidence="1">Ornithine transacetylase</fullName>
        </alternativeName>
    </domain>
    <domain>
        <recommendedName>
            <fullName evidence="1">Amino-acid acetyltransferase</fullName>
            <ecNumber evidence="1">2.3.1.1</ecNumber>
        </recommendedName>
        <alternativeName>
            <fullName evidence="1">N-acetylglutamate synthase</fullName>
            <shortName evidence="1">AGSase</shortName>
        </alternativeName>
    </domain>
    <component>
        <recommendedName>
            <fullName evidence="1">Arginine biosynthesis bifunctional protein ArgJ alpha chain</fullName>
        </recommendedName>
    </component>
    <component>
        <recommendedName>
            <fullName evidence="1">Arginine biosynthesis bifunctional protein ArgJ beta chain</fullName>
        </recommendedName>
    </component>
</protein>
<organism>
    <name type="scientific">Colwellia psychrerythraea (strain 34H / ATCC BAA-681)</name>
    <name type="common">Vibrio psychroerythus</name>
    <dbReference type="NCBI Taxonomy" id="167879"/>
    <lineage>
        <taxon>Bacteria</taxon>
        <taxon>Pseudomonadati</taxon>
        <taxon>Pseudomonadota</taxon>
        <taxon>Gammaproteobacteria</taxon>
        <taxon>Alteromonadales</taxon>
        <taxon>Colwelliaceae</taxon>
        <taxon>Colwellia</taxon>
    </lineage>
</organism>